<proteinExistence type="inferred from homology"/>
<protein>
    <recommendedName>
        <fullName>Uncharacterized transporter C1002.16c</fullName>
    </recommendedName>
</protein>
<organism>
    <name type="scientific">Schizosaccharomyces pombe (strain 972 / ATCC 24843)</name>
    <name type="common">Fission yeast</name>
    <dbReference type="NCBI Taxonomy" id="284812"/>
    <lineage>
        <taxon>Eukaryota</taxon>
        <taxon>Fungi</taxon>
        <taxon>Dikarya</taxon>
        <taxon>Ascomycota</taxon>
        <taxon>Taphrinomycotina</taxon>
        <taxon>Schizosaccharomycetes</taxon>
        <taxon>Schizosaccharomycetales</taxon>
        <taxon>Schizosaccharomycetaceae</taxon>
        <taxon>Schizosaccharomyces</taxon>
    </lineage>
</organism>
<keyword id="KW-0333">Golgi apparatus</keyword>
<keyword id="KW-0472">Membrane</keyword>
<keyword id="KW-1185">Reference proteome</keyword>
<keyword id="KW-0812">Transmembrane</keyword>
<keyword id="KW-1133">Transmembrane helix</keyword>
<keyword id="KW-0813">Transport</keyword>
<sequence length="499" mass="55267">MKSLSHTSSNKSNGSIFTKADESEKVISRSNTASPISIENTHLTKSERDSLLFRLDLVLAPTIMILYLVAFLDRSNIGNAKVAGLPEDLKLKGDQFNIIASVFYVTFILFEMPTTLLMKKVQPKRMLAFIVISYSLTTIFTGFCHNFGGLLAARLVLGFCEAGLFPCLALYLTMIYSRVELAPRIAYLFASSALSGAFGGLFAYAVLHMDGVGGFAGWRWLFIIEGLIGFVCGVAVYFIIPNDITKAWFLSKTHQEMMRKRQLERAADLEAAHFDWKGVKSAFTDFKVYLYALSEFGQDTCLYGFSTFLPAIISGMGYTSLSVQYMTIPVYILGAATYIAASFLSDRFHHRGIILIIGNIFPIVGYILLLACQNNKSVLYFACYLCSVGVYTGAGLNVTWLSANIAPHYKRATAISLQLAIANSSGILAGQIYRYPPKYIAGHLTSLIAIFISTVLHVVNIFFLKHQNSKKQKSLASSSTIDLSEQPKDDKDARFHYIL</sequence>
<accession>Q9US44</accession>
<reference evidence="4" key="1">
    <citation type="journal article" date="2002" name="Nature">
        <title>The genome sequence of Schizosaccharomyces pombe.</title>
        <authorList>
            <person name="Wood V."/>
            <person name="Gwilliam R."/>
            <person name="Rajandream M.A."/>
            <person name="Lyne M.H."/>
            <person name="Lyne R."/>
            <person name="Stewart A."/>
            <person name="Sgouros J.G."/>
            <person name="Peat N."/>
            <person name="Hayles J."/>
            <person name="Baker S.G."/>
            <person name="Basham D."/>
            <person name="Bowman S."/>
            <person name="Brooks K."/>
            <person name="Brown D."/>
            <person name="Brown S."/>
            <person name="Chillingworth T."/>
            <person name="Churcher C.M."/>
            <person name="Collins M."/>
            <person name="Connor R."/>
            <person name="Cronin A."/>
            <person name="Davis P."/>
            <person name="Feltwell T."/>
            <person name="Fraser A."/>
            <person name="Gentles S."/>
            <person name="Goble A."/>
            <person name="Hamlin N."/>
            <person name="Harris D.E."/>
            <person name="Hidalgo J."/>
            <person name="Hodgson G."/>
            <person name="Holroyd S."/>
            <person name="Hornsby T."/>
            <person name="Howarth S."/>
            <person name="Huckle E.J."/>
            <person name="Hunt S."/>
            <person name="Jagels K."/>
            <person name="James K.D."/>
            <person name="Jones L."/>
            <person name="Jones M."/>
            <person name="Leather S."/>
            <person name="McDonald S."/>
            <person name="McLean J."/>
            <person name="Mooney P."/>
            <person name="Moule S."/>
            <person name="Mungall K.L."/>
            <person name="Murphy L.D."/>
            <person name="Niblett D."/>
            <person name="Odell C."/>
            <person name="Oliver K."/>
            <person name="O'Neil S."/>
            <person name="Pearson D."/>
            <person name="Quail M.A."/>
            <person name="Rabbinowitsch E."/>
            <person name="Rutherford K.M."/>
            <person name="Rutter S."/>
            <person name="Saunders D."/>
            <person name="Seeger K."/>
            <person name="Sharp S."/>
            <person name="Skelton J."/>
            <person name="Simmonds M.N."/>
            <person name="Squares R."/>
            <person name="Squares S."/>
            <person name="Stevens K."/>
            <person name="Taylor K."/>
            <person name="Taylor R.G."/>
            <person name="Tivey A."/>
            <person name="Walsh S.V."/>
            <person name="Warren T."/>
            <person name="Whitehead S."/>
            <person name="Woodward J.R."/>
            <person name="Volckaert G."/>
            <person name="Aert R."/>
            <person name="Robben J."/>
            <person name="Grymonprez B."/>
            <person name="Weltjens I."/>
            <person name="Vanstreels E."/>
            <person name="Rieger M."/>
            <person name="Schaefer M."/>
            <person name="Mueller-Auer S."/>
            <person name="Gabel C."/>
            <person name="Fuchs M."/>
            <person name="Duesterhoeft A."/>
            <person name="Fritzc C."/>
            <person name="Holzer E."/>
            <person name="Moestl D."/>
            <person name="Hilbert H."/>
            <person name="Borzym K."/>
            <person name="Langer I."/>
            <person name="Beck A."/>
            <person name="Lehrach H."/>
            <person name="Reinhardt R."/>
            <person name="Pohl T.M."/>
            <person name="Eger P."/>
            <person name="Zimmermann W."/>
            <person name="Wedler H."/>
            <person name="Wambutt R."/>
            <person name="Purnelle B."/>
            <person name="Goffeau A."/>
            <person name="Cadieu E."/>
            <person name="Dreano S."/>
            <person name="Gloux S."/>
            <person name="Lelaure V."/>
            <person name="Mottier S."/>
            <person name="Galibert F."/>
            <person name="Aves S.J."/>
            <person name="Xiang Z."/>
            <person name="Hunt C."/>
            <person name="Moore K."/>
            <person name="Hurst S.M."/>
            <person name="Lucas M."/>
            <person name="Rochet M."/>
            <person name="Gaillardin C."/>
            <person name="Tallada V.A."/>
            <person name="Garzon A."/>
            <person name="Thode G."/>
            <person name="Daga R.R."/>
            <person name="Cruzado L."/>
            <person name="Jimenez J."/>
            <person name="Sanchez M."/>
            <person name="del Rey F."/>
            <person name="Benito J."/>
            <person name="Dominguez A."/>
            <person name="Revuelta J.L."/>
            <person name="Moreno S."/>
            <person name="Armstrong J."/>
            <person name="Forsburg S.L."/>
            <person name="Cerutti L."/>
            <person name="Lowe T."/>
            <person name="McCombie W.R."/>
            <person name="Paulsen I."/>
            <person name="Potashkin J."/>
            <person name="Shpakovski G.V."/>
            <person name="Ussery D."/>
            <person name="Barrell B.G."/>
            <person name="Nurse P."/>
        </authorList>
    </citation>
    <scope>NUCLEOTIDE SEQUENCE [LARGE SCALE GENOMIC DNA]</scope>
    <source>
        <strain>972 / ATCC 24843</strain>
    </source>
</reference>
<reference evidence="3" key="2">
    <citation type="journal article" date="2006" name="Nat. Biotechnol.">
        <title>ORFeome cloning and global analysis of protein localization in the fission yeast Schizosaccharomyces pombe.</title>
        <authorList>
            <person name="Matsuyama A."/>
            <person name="Arai R."/>
            <person name="Yashiroda Y."/>
            <person name="Shirai A."/>
            <person name="Kamata A."/>
            <person name="Sekido S."/>
            <person name="Kobayashi Y."/>
            <person name="Hashimoto A."/>
            <person name="Hamamoto M."/>
            <person name="Hiraoka Y."/>
            <person name="Horinouchi S."/>
            <person name="Yoshida M."/>
        </authorList>
    </citation>
    <scope>SUBCELLULAR LOCATION [LARGE SCALE ANALYSIS]</scope>
</reference>
<comment type="subcellular location">
    <subcellularLocation>
        <location evidence="2">Golgi apparatus</location>
    </subcellularLocation>
    <subcellularLocation>
        <location evidence="1">Membrane</location>
        <topology evidence="1">Multi-pass membrane protein</topology>
    </subcellularLocation>
    <text evidence="1 2">Barrier septum. Cell tip.</text>
</comment>
<comment type="similarity">
    <text evidence="1">Belongs to the major facilitator superfamily. Allantoate permease family.</text>
</comment>
<feature type="chain" id="PRO_0000372722" description="Uncharacterized transporter C1002.16c">
    <location>
        <begin position="1"/>
        <end position="499"/>
    </location>
</feature>
<feature type="transmembrane region" description="Helical" evidence="1">
    <location>
        <begin position="51"/>
        <end position="71"/>
    </location>
</feature>
<feature type="transmembrane region" description="Helical" evidence="1">
    <location>
        <begin position="98"/>
        <end position="118"/>
    </location>
</feature>
<feature type="transmembrane region" description="Helical" evidence="1">
    <location>
        <begin position="127"/>
        <end position="147"/>
    </location>
</feature>
<feature type="transmembrane region" description="Helical" evidence="1">
    <location>
        <begin position="155"/>
        <end position="175"/>
    </location>
</feature>
<feature type="transmembrane region" description="Helical" evidence="1">
    <location>
        <begin position="187"/>
        <end position="207"/>
    </location>
</feature>
<feature type="transmembrane region" description="Helical" evidence="1">
    <location>
        <begin position="220"/>
        <end position="240"/>
    </location>
</feature>
<feature type="transmembrane region" description="Helical" evidence="1">
    <location>
        <begin position="301"/>
        <end position="321"/>
    </location>
</feature>
<feature type="transmembrane region" description="Helical" evidence="1">
    <location>
        <begin position="325"/>
        <end position="345"/>
    </location>
</feature>
<feature type="transmembrane region" description="Helical" evidence="1">
    <location>
        <begin position="352"/>
        <end position="372"/>
    </location>
</feature>
<feature type="transmembrane region" description="Helical" evidence="1">
    <location>
        <begin position="378"/>
        <end position="398"/>
    </location>
</feature>
<feature type="transmembrane region" description="Helical" evidence="1">
    <location>
        <begin position="412"/>
        <end position="432"/>
    </location>
</feature>
<feature type="transmembrane region" description="Helical" evidence="1">
    <location>
        <begin position="444"/>
        <end position="464"/>
    </location>
</feature>
<name>YIZG_SCHPO</name>
<dbReference type="EMBL" id="CU329670">
    <property type="protein sequence ID" value="CAB65616.1"/>
    <property type="molecule type" value="Genomic_DNA"/>
</dbReference>
<dbReference type="SMR" id="Q9US44"/>
<dbReference type="BioGRID" id="279690">
    <property type="interactions" value="1"/>
</dbReference>
<dbReference type="FunCoup" id="Q9US44">
    <property type="interactions" value="95"/>
</dbReference>
<dbReference type="STRING" id="284812.Q9US44"/>
<dbReference type="iPTMnet" id="Q9US44"/>
<dbReference type="SwissPalm" id="Q9US44"/>
<dbReference type="PaxDb" id="4896-SPAC1002.16c.1"/>
<dbReference type="EnsemblFungi" id="SPAC1002.16c.1">
    <property type="protein sequence ID" value="SPAC1002.16c.1:pep"/>
    <property type="gene ID" value="SPAC1002.16c"/>
</dbReference>
<dbReference type="KEGG" id="spo:2543262"/>
<dbReference type="PomBase" id="SPAC1002.16c"/>
<dbReference type="VEuPathDB" id="FungiDB:SPAC1002.16c"/>
<dbReference type="eggNOG" id="KOG2533">
    <property type="taxonomic scope" value="Eukaryota"/>
</dbReference>
<dbReference type="HOGENOM" id="CLU_001265_0_1_1"/>
<dbReference type="InParanoid" id="Q9US44"/>
<dbReference type="OMA" id="YIWASAF"/>
<dbReference type="PhylomeDB" id="Q9US44"/>
<dbReference type="PRO" id="PR:Q9US44"/>
<dbReference type="Proteomes" id="UP000002485">
    <property type="component" value="Chromosome I"/>
</dbReference>
<dbReference type="GO" id="GO:0032153">
    <property type="term" value="C:cell division site"/>
    <property type="evidence" value="ECO:0007005"/>
    <property type="project" value="PomBase"/>
</dbReference>
<dbReference type="GO" id="GO:0051286">
    <property type="term" value="C:cell tip"/>
    <property type="evidence" value="ECO:0007005"/>
    <property type="project" value="PomBase"/>
</dbReference>
<dbReference type="GO" id="GO:0005794">
    <property type="term" value="C:Golgi apparatus"/>
    <property type="evidence" value="ECO:0007005"/>
    <property type="project" value="PomBase"/>
</dbReference>
<dbReference type="GO" id="GO:0016020">
    <property type="term" value="C:membrane"/>
    <property type="evidence" value="ECO:0000318"/>
    <property type="project" value="GO_Central"/>
</dbReference>
<dbReference type="GO" id="GO:0005886">
    <property type="term" value="C:plasma membrane"/>
    <property type="evidence" value="ECO:0000266"/>
    <property type="project" value="PomBase"/>
</dbReference>
<dbReference type="GO" id="GO:0046943">
    <property type="term" value="F:carboxylic acid transmembrane transporter activity"/>
    <property type="evidence" value="ECO:0000266"/>
    <property type="project" value="PomBase"/>
</dbReference>
<dbReference type="GO" id="GO:0022857">
    <property type="term" value="F:transmembrane transporter activity"/>
    <property type="evidence" value="ECO:0000318"/>
    <property type="project" value="GO_Central"/>
</dbReference>
<dbReference type="GO" id="GO:1905039">
    <property type="term" value="P:carboxylic acid transmembrane transport"/>
    <property type="evidence" value="ECO:0000266"/>
    <property type="project" value="PomBase"/>
</dbReference>
<dbReference type="CDD" id="cd17327">
    <property type="entry name" value="MFS_FEN2_like"/>
    <property type="match status" value="1"/>
</dbReference>
<dbReference type="FunFam" id="1.20.1250.20:FF:000068">
    <property type="entry name" value="MFS general substrate transporter"/>
    <property type="match status" value="1"/>
</dbReference>
<dbReference type="FunFam" id="1.20.1250.20:FF:000018">
    <property type="entry name" value="MFS transporter permease"/>
    <property type="match status" value="1"/>
</dbReference>
<dbReference type="Gene3D" id="1.20.1250.20">
    <property type="entry name" value="MFS general substrate transporter like domains"/>
    <property type="match status" value="2"/>
</dbReference>
<dbReference type="InterPro" id="IPR011701">
    <property type="entry name" value="MFS"/>
</dbReference>
<dbReference type="InterPro" id="IPR020846">
    <property type="entry name" value="MFS_dom"/>
</dbReference>
<dbReference type="InterPro" id="IPR036259">
    <property type="entry name" value="MFS_trans_sf"/>
</dbReference>
<dbReference type="PANTHER" id="PTHR43791:SF24">
    <property type="entry name" value="NICOTINIC ACID PLASMA MEMBRANE TRANSPORTER"/>
    <property type="match status" value="1"/>
</dbReference>
<dbReference type="PANTHER" id="PTHR43791">
    <property type="entry name" value="PERMEASE-RELATED"/>
    <property type="match status" value="1"/>
</dbReference>
<dbReference type="Pfam" id="PF07690">
    <property type="entry name" value="MFS_1"/>
    <property type="match status" value="1"/>
</dbReference>
<dbReference type="SUPFAM" id="SSF103473">
    <property type="entry name" value="MFS general substrate transporter"/>
    <property type="match status" value="1"/>
</dbReference>
<dbReference type="PROSITE" id="PS50850">
    <property type="entry name" value="MFS"/>
    <property type="match status" value="1"/>
</dbReference>
<gene>
    <name type="ORF">SPAC1002.16c</name>
</gene>
<evidence type="ECO:0000255" key="1"/>
<evidence type="ECO:0000269" key="2">
    <source>
    </source>
</evidence>
<evidence type="ECO:0000305" key="3"/>
<evidence type="ECO:0000312" key="4">
    <source>
        <dbReference type="EMBL" id="CAB65616.1"/>
    </source>
</evidence>